<sequence>SERPKRVFNIYWNVPTFMCHQYGLYFDEVTNFNIKHNSKDNFQGDKIAIFYDPGEFPALLPLKYGKYKIRNGGVPQEGNITIHLQRFIEHLDKTYPNRNFSGIGVIDFERWRPIFRQNWGNMKIYKNFSIDLVRKEHPFWNKKMIELEASKRFEKYARLFMEETLKLAKKTRKQADWGYYGYPYCFNMSPTNFVPDCDVTAMRENDEMSWLFNNQNVLLPSVYVRRELTPDQRIGLVQGRVKEAVRISNNLKHSPKVFSYWWYVYQDETNTFLTETDVKKTFQEIVINGGDGIIIWGSSSDVNSLSKCMRLREYLLTVLGPIAVNVTEAVN</sequence>
<evidence type="ECO:0000250" key="1">
    <source>
        <dbReference type="UniProtKB" id="E0XKJ9"/>
    </source>
</evidence>
<evidence type="ECO:0000250" key="2">
    <source>
        <dbReference type="UniProtKB" id="Q08169"/>
    </source>
</evidence>
<evidence type="ECO:0000255" key="3"/>
<evidence type="ECO:0000269" key="4">
    <source>
    </source>
</evidence>
<evidence type="ECO:0000303" key="5">
    <source>
    </source>
</evidence>
<evidence type="ECO:0000303" key="6">
    <source>
    </source>
</evidence>
<evidence type="ECO:0000305" key="7"/>
<evidence type="ECO:0000305" key="8">
    <source>
    </source>
</evidence>
<comment type="function">
    <text evidence="1">Hydrolyzes high molecular weight hyaluronic acid to produce small oligosaccharides.</text>
</comment>
<comment type="catalytic activity">
    <reaction evidence="8">
        <text>Random hydrolysis of (1-&gt;4)-linkages between N-acetyl-beta-D-glucosamine and D-glucuronate residues in hyaluronate.</text>
        <dbReference type="EC" id="3.2.1.35"/>
    </reaction>
</comment>
<comment type="subcellular location">
    <subcellularLocation>
        <location evidence="4">Secreted</location>
    </subcellularLocation>
</comment>
<comment type="tissue specificity">
    <text evidence="8">Expressed by the venom gland.</text>
</comment>
<comment type="similarity">
    <text evidence="7">Belongs to the glycosyl hydrolase 56 family.</text>
</comment>
<name>HUGAB_VESVE</name>
<proteinExistence type="evidence at protein level"/>
<protein>
    <recommendedName>
        <fullName evidence="6">Hyaluronidase B</fullName>
        <ecNumber evidence="8">3.2.1.35</ecNumber>
    </recommendedName>
    <alternativeName>
        <fullName evidence="6">Vesp v 2B</fullName>
    </alternativeName>
</protein>
<feature type="chain" id="PRO_0000449971" description="Hyaluronidase B">
    <location>
        <begin position="1"/>
        <end position="331"/>
    </location>
</feature>
<feature type="active site" description="Proton donor" evidence="2">
    <location>
        <position position="109"/>
    </location>
</feature>
<feature type="glycosylation site" description="N-linked (GlcNAc...) asparagine" evidence="3">
    <location>
        <position position="79"/>
    </location>
</feature>
<feature type="disulfide bond" evidence="2">
    <location>
        <begin position="19"/>
        <end position="308"/>
    </location>
</feature>
<feature type="disulfide bond" evidence="2">
    <location>
        <begin position="185"/>
        <end position="197"/>
    </location>
</feature>
<reference evidence="7" key="1">
    <citation type="journal article" date="2015" name="Sci. Rep.">
        <title>Deciphering the venomic transcriptome of killer-wasp Vespa velutina.</title>
        <authorList>
            <person name="Liu Z."/>
            <person name="Chen S."/>
            <person name="Zhou Y."/>
            <person name="Xie C."/>
            <person name="Zhu B."/>
            <person name="Zhu H."/>
            <person name="Liu S."/>
            <person name="Wang W."/>
            <person name="Chen H."/>
            <person name="Ji Y."/>
        </authorList>
    </citation>
    <scope>NUCLEOTIDE SEQUENCE [LARGE SCALE MRNA]</scope>
    <source>
        <tissue evidence="5">Venom gland</tissue>
    </source>
</reference>
<reference evidence="7" key="2">
    <citation type="journal article" date="2020" name="PLoS ONE">
        <title>Purification and molecular characterization of phospholipase, antigen 5 and hyaluronidases from the venom of the Asian hornet (Vespa velutina).</title>
        <authorList>
            <person name="Monsalve R.I."/>
            <person name="Gutierrez R."/>
            <person name="Hoof I."/>
            <person name="Lombardero M."/>
        </authorList>
    </citation>
    <scope>PROTEIN SEQUENCE OF 1-10</scope>
    <scope>SUBCELLULAR LOCATION</scope>
    <scope>IDENTIFICATION BY MASS SPECTROMETRY</scope>
    <source>
        <tissue evidence="6">Venom</tissue>
    </source>
</reference>
<accession>C0HLL5</accession>
<organism>
    <name type="scientific">Vespa velutina</name>
    <name type="common">Asian yellow-legged hornet</name>
    <dbReference type="NCBI Taxonomy" id="202808"/>
    <lineage>
        <taxon>Eukaryota</taxon>
        <taxon>Metazoa</taxon>
        <taxon>Ecdysozoa</taxon>
        <taxon>Arthropoda</taxon>
        <taxon>Hexapoda</taxon>
        <taxon>Insecta</taxon>
        <taxon>Pterygota</taxon>
        <taxon>Neoptera</taxon>
        <taxon>Endopterygota</taxon>
        <taxon>Hymenoptera</taxon>
        <taxon>Apocrita</taxon>
        <taxon>Aculeata</taxon>
        <taxon>Vespoidea</taxon>
        <taxon>Vespidae</taxon>
        <taxon>Vespinae</taxon>
        <taxon>Vespa</taxon>
    </lineage>
</organism>
<keyword id="KW-0903">Direct protein sequencing</keyword>
<keyword id="KW-1015">Disulfide bond</keyword>
<keyword id="KW-0325">Glycoprotein</keyword>
<keyword id="KW-0378">Hydrolase</keyword>
<keyword id="KW-0964">Secreted</keyword>
<dbReference type="EC" id="3.2.1.35" evidence="8"/>
<dbReference type="SMR" id="C0HLL5"/>
<dbReference type="GO" id="GO:0005576">
    <property type="term" value="C:extracellular region"/>
    <property type="evidence" value="ECO:0007669"/>
    <property type="project" value="UniProtKB-SubCell"/>
</dbReference>
<dbReference type="GO" id="GO:0004415">
    <property type="term" value="F:hyalurononglucosaminidase activity"/>
    <property type="evidence" value="ECO:0007669"/>
    <property type="project" value="UniProtKB-EC"/>
</dbReference>
<dbReference type="GO" id="GO:0005975">
    <property type="term" value="P:carbohydrate metabolic process"/>
    <property type="evidence" value="ECO:0007669"/>
    <property type="project" value="InterPro"/>
</dbReference>
<dbReference type="GO" id="GO:0006952">
    <property type="term" value="P:defense response"/>
    <property type="evidence" value="ECO:0007669"/>
    <property type="project" value="InterPro"/>
</dbReference>
<dbReference type="GO" id="GO:0030214">
    <property type="term" value="P:hyaluronan catabolic process"/>
    <property type="evidence" value="ECO:0007669"/>
    <property type="project" value="TreeGrafter"/>
</dbReference>
<dbReference type="Gene3D" id="3.20.20.70">
    <property type="entry name" value="Aldolase class I"/>
    <property type="match status" value="1"/>
</dbReference>
<dbReference type="InterPro" id="IPR013785">
    <property type="entry name" value="Aldolase_TIM"/>
</dbReference>
<dbReference type="InterPro" id="IPR017853">
    <property type="entry name" value="Glycoside_hydrolase_SF"/>
</dbReference>
<dbReference type="InterPro" id="IPR018155">
    <property type="entry name" value="Hyaluronidase"/>
</dbReference>
<dbReference type="InterPro" id="IPR001329">
    <property type="entry name" value="Venom_Hyaluronidase"/>
</dbReference>
<dbReference type="PANTHER" id="PTHR11769">
    <property type="entry name" value="HYALURONIDASE"/>
    <property type="match status" value="1"/>
</dbReference>
<dbReference type="PANTHER" id="PTHR11769:SF35">
    <property type="entry name" value="HYALURONIDASE"/>
    <property type="match status" value="1"/>
</dbReference>
<dbReference type="Pfam" id="PF01630">
    <property type="entry name" value="Glyco_hydro_56"/>
    <property type="match status" value="1"/>
</dbReference>
<dbReference type="PIRSF" id="PIRSF038193">
    <property type="entry name" value="Hyaluronidase"/>
    <property type="match status" value="1"/>
</dbReference>
<dbReference type="PRINTS" id="PR00846">
    <property type="entry name" value="GLHYDRLASE56"/>
</dbReference>
<dbReference type="PRINTS" id="PR00847">
    <property type="entry name" value="HYALURONDASE"/>
</dbReference>
<dbReference type="SUPFAM" id="SSF51445">
    <property type="entry name" value="(Trans)glycosidases"/>
    <property type="match status" value="1"/>
</dbReference>